<feature type="chain" id="PRO_0000370189" description="Putative pectinesterase/pectinesterase inhibitor 26">
    <location>
        <begin position="1"/>
        <end position="968"/>
    </location>
</feature>
<feature type="transmembrane region" description="Helical" evidence="2">
    <location>
        <begin position="33"/>
        <end position="53"/>
    </location>
</feature>
<feature type="region of interest" description="Pectinesterase inhibitor 26 A">
    <location>
        <begin position="71"/>
        <end position="230"/>
    </location>
</feature>
<feature type="region of interest" description="Pectinesterase inhibitor 26 B">
    <location>
        <begin position="265"/>
        <end position="430"/>
    </location>
</feature>
<feature type="region of interest" description="Pectinesterase inhibitor 26 C">
    <location>
        <begin position="453"/>
        <end position="614"/>
    </location>
</feature>
<feature type="region of interest" description="Pectinesterase 26">
    <location>
        <begin position="660"/>
        <end position="954"/>
    </location>
</feature>
<feature type="active site" description="Proton donor; for pectinesterase activity" evidence="3">
    <location>
        <position position="788"/>
    </location>
</feature>
<feature type="active site" description="Nucleophile; for pectinesterase activity" evidence="3">
    <location>
        <position position="809"/>
    </location>
</feature>
<feature type="binding site" evidence="1">
    <location>
        <position position="735"/>
    </location>
    <ligand>
        <name>substrate</name>
        <note>for pectinesterase activity</note>
    </ligand>
</feature>
<feature type="binding site" evidence="1">
    <location>
        <position position="765"/>
    </location>
    <ligand>
        <name>substrate</name>
        <note>for pectinesterase activity</note>
    </ligand>
</feature>
<feature type="binding site" evidence="1">
    <location>
        <position position="872"/>
    </location>
    <ligand>
        <name>substrate</name>
        <note>for pectinesterase activity</note>
    </ligand>
</feature>
<feature type="binding site" evidence="1">
    <location>
        <position position="874"/>
    </location>
    <ligand>
        <name>substrate</name>
        <note>for pectinesterase activity</note>
    </ligand>
</feature>
<feature type="site" description="Transition state stabilizer" evidence="1">
    <location>
        <position position="787"/>
    </location>
</feature>
<feature type="glycosylation site" description="N-linked (GlcNAc...) asparagine" evidence="2">
    <location>
        <position position="101"/>
    </location>
</feature>
<feature type="glycosylation site" description="N-linked (GlcNAc...) asparagine" evidence="2">
    <location>
        <position position="158"/>
    </location>
</feature>
<feature type="glycosylation site" description="N-linked (GlcNAc...) asparagine" evidence="2">
    <location>
        <position position="219"/>
    </location>
</feature>
<feature type="glycosylation site" description="N-linked (GlcNAc...) asparagine" evidence="2">
    <location>
        <position position="295"/>
    </location>
</feature>
<feature type="glycosylation site" description="N-linked (GlcNAc...) asparagine" evidence="2">
    <location>
        <position position="352"/>
    </location>
</feature>
<feature type="glycosylation site" description="N-linked (GlcNAc...) asparagine" evidence="2">
    <location>
        <position position="400"/>
    </location>
</feature>
<feature type="glycosylation site" description="N-linked (GlcNAc...) asparagine" evidence="2">
    <location>
        <position position="464"/>
    </location>
</feature>
<feature type="glycosylation site" description="N-linked (GlcNAc...) asparagine" evidence="2">
    <location>
        <position position="541"/>
    </location>
</feature>
<feature type="glycosylation site" description="N-linked (GlcNAc...) asparagine" evidence="2">
    <location>
        <position position="559"/>
    </location>
</feature>
<feature type="glycosylation site" description="N-linked (GlcNAc...) asparagine" evidence="2">
    <location>
        <position position="603"/>
    </location>
</feature>
<feature type="glycosylation site" description="N-linked (GlcNAc...) asparagine" evidence="2">
    <location>
        <position position="737"/>
    </location>
</feature>
<feature type="glycosylation site" description="N-linked (GlcNAc...) asparagine" evidence="2">
    <location>
        <position position="863"/>
    </location>
</feature>
<feature type="glycosylation site" description="N-linked (GlcNAc...) asparagine" evidence="2">
    <location>
        <position position="900"/>
    </location>
</feature>
<feature type="disulfide bond" evidence="1">
    <location>
        <begin position="802"/>
        <end position="822"/>
    </location>
</feature>
<gene>
    <name type="primary">PME26</name>
    <name type="synonym">ARATH26</name>
    <name type="ordered locus">At3g14300</name>
    <name type="ORF">MLN21.8</name>
</gene>
<accession>Q9LUL8</accession>
<name>PME26_ARATH</name>
<keyword id="KW-0063">Aspartyl esterase</keyword>
<keyword id="KW-1015">Disulfide bond</keyword>
<keyword id="KW-0325">Glycoprotein</keyword>
<keyword id="KW-0378">Hydrolase</keyword>
<keyword id="KW-0472">Membrane</keyword>
<keyword id="KW-1185">Reference proteome</keyword>
<keyword id="KW-0812">Transmembrane</keyword>
<keyword id="KW-1133">Transmembrane helix</keyword>
<comment type="function">
    <text evidence="1">Acts in the modification of cell walls via demethylesterification of cell wall pectin.</text>
</comment>
<comment type="catalytic activity">
    <reaction>
        <text>[(1-&gt;4)-alpha-D-galacturonosyl methyl ester](n) + n H2O = [(1-&gt;4)-alpha-D-galacturonosyl](n) + n methanol + n H(+)</text>
        <dbReference type="Rhea" id="RHEA:22380"/>
        <dbReference type="Rhea" id="RHEA-COMP:14570"/>
        <dbReference type="Rhea" id="RHEA-COMP:14573"/>
        <dbReference type="ChEBI" id="CHEBI:15377"/>
        <dbReference type="ChEBI" id="CHEBI:15378"/>
        <dbReference type="ChEBI" id="CHEBI:17790"/>
        <dbReference type="ChEBI" id="CHEBI:140522"/>
        <dbReference type="ChEBI" id="CHEBI:140523"/>
        <dbReference type="EC" id="3.1.1.11"/>
    </reaction>
</comment>
<comment type="pathway">
    <text>Glycan metabolism; pectin degradation; 2-dehydro-3-deoxy-D-gluconate from pectin: step 1/5.</text>
</comment>
<comment type="subcellular location">
    <subcellularLocation>
        <location evidence="5">Membrane</location>
        <topology evidence="5">Single-pass membrane protein</topology>
    </subcellularLocation>
</comment>
<comment type="tissue specificity">
    <text evidence="4">Expressed in flowers.</text>
</comment>
<comment type="miscellaneous">
    <text>The PMEI regions may act as autoinhibitory domains and prevent untimely PME activity during transport.</text>
</comment>
<comment type="similarity">
    <text evidence="5">In the N-terminal section; belongs to the PMEI family.</text>
</comment>
<comment type="similarity">
    <text evidence="5">In the C-terminal section; belongs to the pectinesterase family.</text>
</comment>
<proteinExistence type="evidence at transcript level"/>
<reference key="1">
    <citation type="journal article" date="2000" name="DNA Res.">
        <title>Structural analysis of Arabidopsis thaliana chromosome 3. I. Sequence features of the regions of 4,504,864 bp covered by sixty P1 and TAC clones.</title>
        <authorList>
            <person name="Sato S."/>
            <person name="Nakamura Y."/>
            <person name="Kaneko T."/>
            <person name="Katoh T."/>
            <person name="Asamizu E."/>
            <person name="Tabata S."/>
        </authorList>
    </citation>
    <scope>NUCLEOTIDE SEQUENCE [LARGE SCALE GENOMIC DNA]</scope>
    <source>
        <strain>cv. Columbia</strain>
    </source>
</reference>
<reference key="2">
    <citation type="journal article" date="2017" name="Plant J.">
        <title>Araport11: a complete reannotation of the Arabidopsis thaliana reference genome.</title>
        <authorList>
            <person name="Cheng C.Y."/>
            <person name="Krishnakumar V."/>
            <person name="Chan A.P."/>
            <person name="Thibaud-Nissen F."/>
            <person name="Schobel S."/>
            <person name="Town C.D."/>
        </authorList>
    </citation>
    <scope>GENOME REANNOTATION</scope>
    <source>
        <strain>cv. Columbia</strain>
    </source>
</reference>
<reference key="3">
    <citation type="journal article" date="1998" name="Gene">
        <title>Characterization of the pectin methylesterase-like gene AtPME3: a new member of a gene family comprising at least 12 genes in Arabidopsis thaliana.</title>
        <authorList>
            <person name="Micheli F."/>
            <person name="Holliger C."/>
            <person name="Goldberg R."/>
            <person name="Richard L."/>
        </authorList>
    </citation>
    <scope>TISSUE SPECIFICITY</scope>
</reference>
<reference key="4">
    <citation type="journal article" date="2004" name="Carbohydr. Res.">
        <title>Pectin methylesterases: sequence-structural features and phylogenetic relationships.</title>
        <authorList>
            <person name="Markovic O."/>
            <person name="Janecek S."/>
        </authorList>
    </citation>
    <scope>GENE FAMILY</scope>
    <scope>NOMENCLATURE</scope>
</reference>
<dbReference type="EC" id="3.1.1.11"/>
<dbReference type="EMBL" id="AB022220">
    <property type="protein sequence ID" value="BAB01036.1"/>
    <property type="molecule type" value="Genomic_DNA"/>
</dbReference>
<dbReference type="EMBL" id="CP002686">
    <property type="protein sequence ID" value="AEE75499.1"/>
    <property type="molecule type" value="Genomic_DNA"/>
</dbReference>
<dbReference type="SMR" id="Q9LUL8"/>
<dbReference type="FunCoup" id="Q9LUL8">
    <property type="interactions" value="1"/>
</dbReference>
<dbReference type="STRING" id="3702.Q9LUL8"/>
<dbReference type="GlyCosmos" id="Q9LUL8">
    <property type="glycosylation" value="13 sites, No reported glycans"/>
</dbReference>
<dbReference type="GlyGen" id="Q9LUL8">
    <property type="glycosylation" value="15 sites"/>
</dbReference>
<dbReference type="iPTMnet" id="Q9LUL8"/>
<dbReference type="PaxDb" id="3702-AT3G14300.1"/>
<dbReference type="ProteomicsDB" id="234779"/>
<dbReference type="EnsemblPlants" id="AT3G14300.1">
    <property type="protein sequence ID" value="AT3G14300.1"/>
    <property type="gene ID" value="AT3G14300"/>
</dbReference>
<dbReference type="GeneID" id="820650"/>
<dbReference type="Gramene" id="AT3G14300.1">
    <property type="protein sequence ID" value="AT3G14300.1"/>
    <property type="gene ID" value="AT3G14300"/>
</dbReference>
<dbReference type="KEGG" id="ath:AT3G14300"/>
<dbReference type="Araport" id="AT3G14300"/>
<dbReference type="TAIR" id="AT3G14300">
    <property type="gene designation" value="ATPMEPCRC"/>
</dbReference>
<dbReference type="eggNOG" id="ENOG502RA2Q">
    <property type="taxonomic scope" value="Eukaryota"/>
</dbReference>
<dbReference type="HOGENOM" id="CLU_306163_0_0_1"/>
<dbReference type="InParanoid" id="Q9LUL8"/>
<dbReference type="OMA" id="DEISHTN"/>
<dbReference type="PhylomeDB" id="Q9LUL8"/>
<dbReference type="BioCyc" id="ARA:AT3G14300-MONOMER"/>
<dbReference type="UniPathway" id="UPA00545">
    <property type="reaction ID" value="UER00823"/>
</dbReference>
<dbReference type="PRO" id="PR:Q9LUL8"/>
<dbReference type="Proteomes" id="UP000006548">
    <property type="component" value="Chromosome 3"/>
</dbReference>
<dbReference type="ExpressionAtlas" id="Q9LUL8">
    <property type="expression patterns" value="baseline and differential"/>
</dbReference>
<dbReference type="GO" id="GO:0016020">
    <property type="term" value="C:membrane"/>
    <property type="evidence" value="ECO:0007669"/>
    <property type="project" value="UniProtKB-SubCell"/>
</dbReference>
<dbReference type="GO" id="GO:0009506">
    <property type="term" value="C:plasmodesma"/>
    <property type="evidence" value="ECO:0007005"/>
    <property type="project" value="TAIR"/>
</dbReference>
<dbReference type="GO" id="GO:0004857">
    <property type="term" value="F:enzyme inhibitor activity"/>
    <property type="evidence" value="ECO:0007669"/>
    <property type="project" value="InterPro"/>
</dbReference>
<dbReference type="GO" id="GO:0030599">
    <property type="term" value="F:pectinesterase activity"/>
    <property type="evidence" value="ECO:0000250"/>
    <property type="project" value="TAIR"/>
</dbReference>
<dbReference type="GO" id="GO:0042545">
    <property type="term" value="P:cell wall modification"/>
    <property type="evidence" value="ECO:0007669"/>
    <property type="project" value="InterPro"/>
</dbReference>
<dbReference type="GO" id="GO:0045490">
    <property type="term" value="P:pectin catabolic process"/>
    <property type="evidence" value="ECO:0007669"/>
    <property type="project" value="UniProtKB-UniPathway"/>
</dbReference>
<dbReference type="CDD" id="cd15798">
    <property type="entry name" value="PMEI-like_3"/>
    <property type="match status" value="3"/>
</dbReference>
<dbReference type="FunFam" id="1.20.140.40:FF:000010">
    <property type="entry name" value="Pectinesterase"/>
    <property type="match status" value="3"/>
</dbReference>
<dbReference type="FunFam" id="2.160.20.10:FF:000001">
    <property type="entry name" value="Pectinesterase"/>
    <property type="match status" value="1"/>
</dbReference>
<dbReference type="Gene3D" id="1.20.140.40">
    <property type="entry name" value="Invertase/pectin methylesterase inhibitor family protein"/>
    <property type="match status" value="3"/>
</dbReference>
<dbReference type="Gene3D" id="2.160.20.10">
    <property type="entry name" value="Single-stranded right-handed beta-helix, Pectin lyase-like"/>
    <property type="match status" value="1"/>
</dbReference>
<dbReference type="InterPro" id="IPR035513">
    <property type="entry name" value="Invertase/methylesterase_inhib"/>
</dbReference>
<dbReference type="InterPro" id="IPR012334">
    <property type="entry name" value="Pectin_lyas_fold"/>
</dbReference>
<dbReference type="InterPro" id="IPR011050">
    <property type="entry name" value="Pectin_lyase_fold/virulence"/>
</dbReference>
<dbReference type="InterPro" id="IPR033131">
    <property type="entry name" value="Pectinesterase_Asp_AS"/>
</dbReference>
<dbReference type="InterPro" id="IPR000070">
    <property type="entry name" value="Pectinesterase_cat"/>
</dbReference>
<dbReference type="InterPro" id="IPR006501">
    <property type="entry name" value="Pectinesterase_inhib_dom"/>
</dbReference>
<dbReference type="InterPro" id="IPR018040">
    <property type="entry name" value="Pectinesterase_Tyr_AS"/>
</dbReference>
<dbReference type="NCBIfam" id="TIGR01614">
    <property type="entry name" value="PME_inhib"/>
    <property type="match status" value="3"/>
</dbReference>
<dbReference type="PANTHER" id="PTHR31707">
    <property type="entry name" value="PECTINESTERASE"/>
    <property type="match status" value="1"/>
</dbReference>
<dbReference type="Pfam" id="PF01095">
    <property type="entry name" value="Pectinesterase"/>
    <property type="match status" value="1"/>
</dbReference>
<dbReference type="Pfam" id="PF04043">
    <property type="entry name" value="PMEI"/>
    <property type="match status" value="3"/>
</dbReference>
<dbReference type="SMART" id="SM00856">
    <property type="entry name" value="PMEI"/>
    <property type="match status" value="3"/>
</dbReference>
<dbReference type="SUPFAM" id="SSF51126">
    <property type="entry name" value="Pectin lyase-like"/>
    <property type="match status" value="1"/>
</dbReference>
<dbReference type="SUPFAM" id="SSF101148">
    <property type="entry name" value="Plant invertase/pectin methylesterase inhibitor"/>
    <property type="match status" value="3"/>
</dbReference>
<dbReference type="PROSITE" id="PS00800">
    <property type="entry name" value="PECTINESTERASE_1"/>
    <property type="match status" value="1"/>
</dbReference>
<dbReference type="PROSITE" id="PS00503">
    <property type="entry name" value="PECTINESTERASE_2"/>
    <property type="match status" value="1"/>
</dbReference>
<organism>
    <name type="scientific">Arabidopsis thaliana</name>
    <name type="common">Mouse-ear cress</name>
    <dbReference type="NCBI Taxonomy" id="3702"/>
    <lineage>
        <taxon>Eukaryota</taxon>
        <taxon>Viridiplantae</taxon>
        <taxon>Streptophyta</taxon>
        <taxon>Embryophyta</taxon>
        <taxon>Tracheophyta</taxon>
        <taxon>Spermatophyta</taxon>
        <taxon>Magnoliopsida</taxon>
        <taxon>eudicotyledons</taxon>
        <taxon>Gunneridae</taxon>
        <taxon>Pentapetalae</taxon>
        <taxon>rosids</taxon>
        <taxon>malvids</taxon>
        <taxon>Brassicales</taxon>
        <taxon>Brassicaceae</taxon>
        <taxon>Camelineae</taxon>
        <taxon>Arabidopsis</taxon>
    </lineage>
</organism>
<evidence type="ECO:0000250" key="1"/>
<evidence type="ECO:0000255" key="2"/>
<evidence type="ECO:0000255" key="3">
    <source>
        <dbReference type="PROSITE-ProRule" id="PRU10040"/>
    </source>
</evidence>
<evidence type="ECO:0000269" key="4">
    <source>
    </source>
</evidence>
<evidence type="ECO:0000305" key="5"/>
<protein>
    <recommendedName>
        <fullName>Putative pectinesterase/pectinesterase inhibitor 26</fullName>
    </recommendedName>
    <alternativeName>
        <fullName>AtPMEpcrC</fullName>
    </alternativeName>
    <domain>
        <recommendedName>
            <fullName>Pectinesterase inhibitor 26</fullName>
        </recommendedName>
        <alternativeName>
            <fullName>Pectin methylesterase inhibitor 26</fullName>
        </alternativeName>
    </domain>
    <domain>
        <recommendedName>
            <fullName>Pectinesterase 26</fullName>
            <shortName>PE 26</shortName>
            <ecNumber>3.1.1.11</ecNumber>
        </recommendedName>
        <alternativeName>
            <fullName>Pectin methylesterase 26</fullName>
            <shortName>AtPME26</shortName>
        </alternativeName>
    </domain>
</protein>
<sequence length="968" mass="105628">MDTVKSINKGYGKVDETQDLALKRKTRKRLYQIGISVAVLVAIIISSTVTIAIHSRKGNSPHPTPSSVPELTPAASLKTVCSVTNYPVSCFSSISKLPLSNTTDPEVIFRLSLQVVIDELNSIVELPKKLAEETDDEGLKSALSVCEHLLDLAIDRVNETVSAMEVVDGKKILNAATIDDLLTWLSAAVTYHGTCLDALDEISHTNSAIPLKLKSGMVNSTEFTSNSLAIVAKILSTISDFGIPIHGRRLLNSSPHATPISVPKLTPAASLRNVCSVTRYPASCVSSISKLPSSNTTDPEALFRLSLQVVINELNSIAGLPKKLAEETDDERLKSSLSVCGDVFNDAIDIVNDTISTMEEVGDGKKILKSSTIDEIQTWLSAAVTDHDTCLDALDELSQNKTEYANSPISLKLKSAMVNSRKFTSNSLAIIAKFPIHERHGVQSPRLRKSPHPTPSSVLRTVCNVTNYPASCISSISKLPLSKTTTDPKVLFRLSLQVTFDELNSIVGLPKKLAEETNDEGLKSALSVCADVFDLAVDSVNDTISSLDEVISGGKKNLNSSTIGDLITWLSSAVTDIGTCGDTLDEDNYNSPIPQKLKSAMVNSTEFTSNSLAIVAQVLKKPSKSRIPVQGRRLLNSNSFPNWVRPGVRRLLQAKNLTPHVTVAADGSGDVRTVNEAVWRVPKKGKTMFVIYVKAGTYVENVLMKKDKWNVFIYGDGRDKTIISGSTNMVDGVRTFNTSTFATEGKGFMMKDMGIINTAGPEKHQAVAFRSDSDRSVYYRCSFDGYQDTLYTHSNRQYYRNCDVTGTVDFIFGAGTVVFQGCSIRPRQPLPNQFNTITAEGTQEANQNTGISIHQCTISPNGNVTATTYLGRPWKLFSKTVIMQSVIGSFVNPAGWIAWNSTYDPPPRTIFYREYKNSGPGSDLSKRVKWAGYKPISSDDEAARFTVKYFLRGDDNWIPKAVMGMPPL</sequence>